<name>Y604_STRP8</name>
<proteinExistence type="inferred from homology"/>
<reference key="1">
    <citation type="journal article" date="2002" name="Proc. Natl. Acad. Sci. U.S.A.">
        <title>Genome sequence and comparative microarray analysis of serotype M18 group A Streptococcus strains associated with acute rheumatic fever outbreaks.</title>
        <authorList>
            <person name="Smoot J.C."/>
            <person name="Barbian K.D."/>
            <person name="Van Gompel J.J."/>
            <person name="Smoot L.M."/>
            <person name="Chaussee M.S."/>
            <person name="Sylva G.L."/>
            <person name="Sturdevant D.E."/>
            <person name="Ricklefs S.M."/>
            <person name="Porcella S.F."/>
            <person name="Parkins L.D."/>
            <person name="Beres S.B."/>
            <person name="Campbell D.S."/>
            <person name="Smith T.M."/>
            <person name="Zhang Q."/>
            <person name="Kapur V."/>
            <person name="Daly J.A."/>
            <person name="Veasy L.G."/>
            <person name="Musser J.M."/>
        </authorList>
    </citation>
    <scope>NUCLEOTIDE SEQUENCE [LARGE SCALE GENOMIC DNA]</scope>
    <source>
        <strain>MGAS8232</strain>
    </source>
</reference>
<evidence type="ECO:0000305" key="1"/>
<accession>P66770</accession>
<accession>Q9A0Z8</accession>
<comment type="similarity">
    <text evidence="1">Belongs to the AdoMet synthetase 2 family.</text>
</comment>
<sequence>MDLKITNGFYDPSHLSYEVVERKGLGHPDTLADGIAEQIEIDYSLYCLDKFGVIPHHNFDKIIIRGGHSVQDFGGSDFIEPIKIIFLGRASKKCFNSSIPLFKIQKKAATKYLNRILPNLDVENYVEFETLTSDFTTKTNWFSPEAIEDLPEYLDVPKANDTATMISYWPLTISEELALMIEGYFYKLDKNELPTPRFTKMGGDIKVMVVRNDLEYSIRINFPLISKFFNNDIESQLYVDKHVEKIKKYIEQKYKNISFSIDYHYYLTTTGSCIDFGEEGAVGRGNKTHGIISSFRPNTMEAPAGKNCTYFVGKVWGFLSDTIAKEIYEAFNTPCQIIMQLNIGSKLYRPTHLFIQTEESVDQERVLEIVNRHLNNGKQNTNLILSTQHFIPKTNVYDG</sequence>
<protein>
    <recommendedName>
        <fullName>Uncharacterized protein spyM18_0604</fullName>
    </recommendedName>
</protein>
<dbReference type="EMBL" id="AE009949">
    <property type="protein sequence ID" value="AAL97295.1"/>
    <property type="molecule type" value="Genomic_DNA"/>
</dbReference>
<dbReference type="RefSeq" id="WP_002985626.1">
    <property type="nucleotide sequence ID" value="NC_003485.1"/>
</dbReference>
<dbReference type="SMR" id="P66770"/>
<dbReference type="KEGG" id="spm:spyM18_0604"/>
<dbReference type="HOGENOM" id="CLU_057642_0_0_9"/>
<dbReference type="Gene3D" id="3.30.300.10">
    <property type="match status" value="1"/>
</dbReference>
<dbReference type="Gene3D" id="3.30.300.280">
    <property type="entry name" value="S-adenosylmethionine synthetase, C-terminal domain"/>
    <property type="match status" value="1"/>
</dbReference>
<dbReference type="Gene3D" id="3.30.300.340">
    <property type="entry name" value="S-adenosylmethionine synthetase, N-terminal domain"/>
    <property type="match status" value="1"/>
</dbReference>
<dbReference type="InterPro" id="IPR042543">
    <property type="entry name" value="AdoMet_synthase_2"/>
</dbReference>
<dbReference type="InterPro" id="IPR027790">
    <property type="entry name" value="AdoMet_synthase_2_family"/>
</dbReference>
<dbReference type="InterPro" id="IPR042544">
    <property type="entry name" value="AdoMet_synthase_3"/>
</dbReference>
<dbReference type="NCBIfam" id="NF003362">
    <property type="entry name" value="PRK04439.1-1"/>
    <property type="match status" value="1"/>
</dbReference>
<dbReference type="PANTHER" id="PTHR36697">
    <property type="entry name" value="S-ADENOSYLMETHIONINE SYNTHASE"/>
    <property type="match status" value="1"/>
</dbReference>
<dbReference type="PANTHER" id="PTHR36697:SF1">
    <property type="entry name" value="S-ADENOSYLMETHIONINE SYNTHASE"/>
    <property type="match status" value="1"/>
</dbReference>
<dbReference type="Pfam" id="PF01941">
    <property type="entry name" value="AdoMet_Synthase"/>
    <property type="match status" value="1"/>
</dbReference>
<feature type="chain" id="PRO_0000150049" description="Uncharacterized protein spyM18_0604">
    <location>
        <begin position="1"/>
        <end position="399"/>
    </location>
</feature>
<gene>
    <name type="ordered locus">spyM18_0604</name>
</gene>
<organism>
    <name type="scientific">Streptococcus pyogenes serotype M18 (strain MGAS8232)</name>
    <dbReference type="NCBI Taxonomy" id="186103"/>
    <lineage>
        <taxon>Bacteria</taxon>
        <taxon>Bacillati</taxon>
        <taxon>Bacillota</taxon>
        <taxon>Bacilli</taxon>
        <taxon>Lactobacillales</taxon>
        <taxon>Streptococcaceae</taxon>
        <taxon>Streptococcus</taxon>
    </lineage>
</organism>